<evidence type="ECO:0000255" key="1">
    <source>
        <dbReference type="HAMAP-Rule" id="MF_01393"/>
    </source>
</evidence>
<comment type="function">
    <text evidence="1">Key component of the proton channel; it plays a direct role in the translocation of protons across the membrane.</text>
</comment>
<comment type="subunit">
    <text evidence="1">F-type ATPases have 2 components, CF(1) - the catalytic core - and CF(0) - the membrane proton channel. CF(1) has five subunits: alpha(3), beta(3), gamma(1), delta(1), epsilon(1). CF(0) has four main subunits: a, b, b' and c.</text>
</comment>
<comment type="subcellular location">
    <subcellularLocation>
        <location evidence="1">Plastid</location>
        <location evidence="1">Chloroplast thylakoid membrane</location>
        <topology evidence="1">Multi-pass membrane protein</topology>
    </subcellularLocation>
</comment>
<comment type="similarity">
    <text evidence="1">Belongs to the ATPase A chain family.</text>
</comment>
<accession>B0Z4W3</accession>
<protein>
    <recommendedName>
        <fullName evidence="1">ATP synthase subunit a, chloroplastic</fullName>
    </recommendedName>
    <alternativeName>
        <fullName evidence="1">ATP synthase F0 sector subunit a</fullName>
    </alternativeName>
    <alternativeName>
        <fullName evidence="1">F-ATPase subunit IV</fullName>
    </alternativeName>
</protein>
<keyword id="KW-0066">ATP synthesis</keyword>
<keyword id="KW-0138">CF(0)</keyword>
<keyword id="KW-0150">Chloroplast</keyword>
<keyword id="KW-0375">Hydrogen ion transport</keyword>
<keyword id="KW-0406">Ion transport</keyword>
<keyword id="KW-0472">Membrane</keyword>
<keyword id="KW-0934">Plastid</keyword>
<keyword id="KW-0793">Thylakoid</keyword>
<keyword id="KW-0812">Transmembrane</keyword>
<keyword id="KW-1133">Transmembrane helix</keyword>
<keyword id="KW-0813">Transport</keyword>
<feature type="chain" id="PRO_0000362581" description="ATP synthase subunit a, chloroplastic">
    <location>
        <begin position="1"/>
        <end position="247"/>
    </location>
</feature>
<feature type="transmembrane region" description="Helical" evidence="1">
    <location>
        <begin position="38"/>
        <end position="58"/>
    </location>
</feature>
<feature type="transmembrane region" description="Helical" evidence="1">
    <location>
        <begin position="95"/>
        <end position="115"/>
    </location>
</feature>
<feature type="transmembrane region" description="Helical" evidence="1">
    <location>
        <begin position="134"/>
        <end position="154"/>
    </location>
</feature>
<feature type="transmembrane region" description="Helical" evidence="1">
    <location>
        <begin position="199"/>
        <end position="219"/>
    </location>
</feature>
<feature type="transmembrane region" description="Helical" evidence="1">
    <location>
        <begin position="220"/>
        <end position="240"/>
    </location>
</feature>
<organism>
    <name type="scientific">Oenothera biennis</name>
    <name type="common">German evening primrose</name>
    <name type="synonym">Onagra biennis</name>
    <dbReference type="NCBI Taxonomy" id="3942"/>
    <lineage>
        <taxon>Eukaryota</taxon>
        <taxon>Viridiplantae</taxon>
        <taxon>Streptophyta</taxon>
        <taxon>Embryophyta</taxon>
        <taxon>Tracheophyta</taxon>
        <taxon>Spermatophyta</taxon>
        <taxon>Magnoliopsida</taxon>
        <taxon>eudicotyledons</taxon>
        <taxon>Gunneridae</taxon>
        <taxon>Pentapetalae</taxon>
        <taxon>rosids</taxon>
        <taxon>malvids</taxon>
        <taxon>Myrtales</taxon>
        <taxon>Onagraceae</taxon>
        <taxon>Onagroideae</taxon>
        <taxon>Onagreae</taxon>
        <taxon>Oenothera</taxon>
    </lineage>
</organism>
<gene>
    <name evidence="1" type="primary">atpI</name>
</gene>
<geneLocation type="chloroplast"/>
<name>ATPI_OENBI</name>
<dbReference type="EMBL" id="EU262889">
    <property type="protein sequence ID" value="ABW98875.1"/>
    <property type="molecule type" value="Genomic_DNA"/>
</dbReference>
<dbReference type="RefSeq" id="YP_001687370.1">
    <property type="nucleotide sequence ID" value="NC_010361.1"/>
</dbReference>
<dbReference type="SMR" id="B0Z4W3"/>
<dbReference type="GeneID" id="5952018"/>
<dbReference type="GO" id="GO:0009535">
    <property type="term" value="C:chloroplast thylakoid membrane"/>
    <property type="evidence" value="ECO:0007669"/>
    <property type="project" value="UniProtKB-SubCell"/>
</dbReference>
<dbReference type="GO" id="GO:0005886">
    <property type="term" value="C:plasma membrane"/>
    <property type="evidence" value="ECO:0007669"/>
    <property type="project" value="UniProtKB-UniRule"/>
</dbReference>
<dbReference type="GO" id="GO:0045259">
    <property type="term" value="C:proton-transporting ATP synthase complex"/>
    <property type="evidence" value="ECO:0007669"/>
    <property type="project" value="UniProtKB-KW"/>
</dbReference>
<dbReference type="GO" id="GO:0046933">
    <property type="term" value="F:proton-transporting ATP synthase activity, rotational mechanism"/>
    <property type="evidence" value="ECO:0007669"/>
    <property type="project" value="UniProtKB-UniRule"/>
</dbReference>
<dbReference type="CDD" id="cd00310">
    <property type="entry name" value="ATP-synt_Fo_a_6"/>
    <property type="match status" value="1"/>
</dbReference>
<dbReference type="FunFam" id="1.20.120.220:FF:000001">
    <property type="entry name" value="ATP synthase subunit a, chloroplastic"/>
    <property type="match status" value="1"/>
</dbReference>
<dbReference type="Gene3D" id="1.20.120.220">
    <property type="entry name" value="ATP synthase, F0 complex, subunit A"/>
    <property type="match status" value="1"/>
</dbReference>
<dbReference type="HAMAP" id="MF_01393">
    <property type="entry name" value="ATP_synth_a_bact"/>
    <property type="match status" value="1"/>
</dbReference>
<dbReference type="InterPro" id="IPR045082">
    <property type="entry name" value="ATP_syn_F0_a_bact/chloroplast"/>
</dbReference>
<dbReference type="InterPro" id="IPR000568">
    <property type="entry name" value="ATP_synth_F0_asu"/>
</dbReference>
<dbReference type="InterPro" id="IPR023011">
    <property type="entry name" value="ATP_synth_F0_asu_AS"/>
</dbReference>
<dbReference type="InterPro" id="IPR035908">
    <property type="entry name" value="F0_ATP_A_sf"/>
</dbReference>
<dbReference type="NCBIfam" id="TIGR01131">
    <property type="entry name" value="ATP_synt_6_or_A"/>
    <property type="match status" value="1"/>
</dbReference>
<dbReference type="PANTHER" id="PTHR42823">
    <property type="entry name" value="ATP SYNTHASE SUBUNIT A, CHLOROPLASTIC"/>
    <property type="match status" value="1"/>
</dbReference>
<dbReference type="PANTHER" id="PTHR42823:SF3">
    <property type="entry name" value="ATP SYNTHASE SUBUNIT A, CHLOROPLASTIC"/>
    <property type="match status" value="1"/>
</dbReference>
<dbReference type="Pfam" id="PF00119">
    <property type="entry name" value="ATP-synt_A"/>
    <property type="match status" value="1"/>
</dbReference>
<dbReference type="PRINTS" id="PR00123">
    <property type="entry name" value="ATPASEA"/>
</dbReference>
<dbReference type="SUPFAM" id="SSF81336">
    <property type="entry name" value="F1F0 ATP synthase subunit A"/>
    <property type="match status" value="1"/>
</dbReference>
<dbReference type="PROSITE" id="PS00449">
    <property type="entry name" value="ATPASE_A"/>
    <property type="match status" value="1"/>
</dbReference>
<sequence length="247" mass="27117">MDVLSCSNNTLKGLYDISGVEVGQHFYWQIGGFQVHGQVLITSWVVIAILLGSASIAVRNPQTIPNDSQNFFEYILEFIRDVSKTQIGEEYGPWVPFIGTMFLFIFVSNWSGALLPWKLVELPHGELAAPTNDINTTVALALLTSVAYFYAGLSKKGLGYFSKYIQPTPILLPINILEDFTKPLSLSFRLFGNILADELVVVVLVSLVPSVVPIPVMFLGLFTSGIQALIFATLAAAYIGESMEGHH</sequence>
<proteinExistence type="inferred from homology"/>
<reference key="1">
    <citation type="journal article" date="2008" name="Nucleic Acids Res.">
        <title>The complete nucleotide sequences of the five genetically distinct plastid genomes of Oenothera, subsection Oenothera: I. Sequence evaluation and plastome evolution.</title>
        <authorList>
            <person name="Greiner S."/>
            <person name="Wang X."/>
            <person name="Rauwolf U."/>
            <person name="Silber M.V."/>
            <person name="Mayer K."/>
            <person name="Meurer J."/>
            <person name="Haberer G."/>
            <person name="Herrmann R.G."/>
        </authorList>
    </citation>
    <scope>NUCLEOTIDE SEQUENCE [LARGE SCALE GENOMIC DNA]</scope>
    <source>
        <strain>cv. Suaveolens Grado</strain>
    </source>
</reference>